<feature type="chain" id="PRO_0000184615" description="Galactokinase">
    <location>
        <begin position="1"/>
        <end position="399"/>
    </location>
</feature>
<feature type="active site" description="Proton acceptor" evidence="4">
    <location>
        <position position="183"/>
    </location>
</feature>
<feature type="binding site">
    <location>
        <begin position="42"/>
        <end position="45"/>
    </location>
    <ligand>
        <name>substrate</name>
    </ligand>
</feature>
<feature type="binding site" evidence="1">
    <location>
        <position position="76"/>
    </location>
    <ligand>
        <name>ATP</name>
        <dbReference type="ChEBI" id="CHEBI:30616"/>
    </ligand>
</feature>
<feature type="binding site" evidence="1">
    <location>
        <begin position="133"/>
        <end position="139"/>
    </location>
    <ligand>
        <name>ATP</name>
        <dbReference type="ChEBI" id="CHEBI:30616"/>
    </ligand>
</feature>
<feature type="binding site" evidence="1">
    <location>
        <position position="139"/>
    </location>
    <ligand>
        <name>Mg(2+)</name>
        <dbReference type="ChEBI" id="CHEBI:18420"/>
    </ligand>
</feature>
<feature type="binding site" evidence="1">
    <location>
        <position position="171"/>
    </location>
    <ligand>
        <name>Mg(2+)</name>
        <dbReference type="ChEBI" id="CHEBI:18420"/>
    </ligand>
</feature>
<feature type="binding site" evidence="1 2">
    <location>
        <position position="233"/>
    </location>
    <ligand>
        <name>substrate</name>
    </ligand>
</feature>
<feature type="site" description="Transition state stabilizer" evidence="3">
    <location>
        <position position="36"/>
    </location>
</feature>
<feature type="sequence conflict" description="In Ref. 3; AAC63017." evidence="3" ref="3">
    <original>T</original>
    <variation>A</variation>
    <location>
        <position position="290"/>
    </location>
</feature>
<feature type="helix" evidence="5">
    <location>
        <begin position="10"/>
        <end position="22"/>
    </location>
</feature>
<feature type="strand" evidence="5">
    <location>
        <begin position="29"/>
        <end position="40"/>
    </location>
</feature>
<feature type="turn" evidence="5">
    <location>
        <begin position="45"/>
        <end position="48"/>
    </location>
</feature>
<feature type="strand" evidence="5">
    <location>
        <begin position="50"/>
        <end position="66"/>
    </location>
</feature>
<feature type="strand" evidence="5">
    <location>
        <begin position="68"/>
        <end position="76"/>
    </location>
</feature>
<feature type="helix" evidence="5">
    <location>
        <begin position="80"/>
        <end position="82"/>
    </location>
</feature>
<feature type="strand" evidence="5">
    <location>
        <begin position="85"/>
        <end position="88"/>
    </location>
</feature>
<feature type="helix" evidence="5">
    <location>
        <begin position="101"/>
        <end position="113"/>
    </location>
</feature>
<feature type="strand" evidence="5">
    <location>
        <begin position="122"/>
        <end position="128"/>
    </location>
</feature>
<feature type="strand" evidence="5">
    <location>
        <begin position="134"/>
        <end position="136"/>
    </location>
</feature>
<feature type="helix" evidence="5">
    <location>
        <begin position="138"/>
        <end position="153"/>
    </location>
</feature>
<feature type="helix" evidence="5">
    <location>
        <begin position="160"/>
        <end position="173"/>
    </location>
</feature>
<feature type="helix" evidence="5">
    <location>
        <begin position="182"/>
        <end position="189"/>
    </location>
</feature>
<feature type="strand" evidence="5">
    <location>
        <begin position="194"/>
        <end position="199"/>
    </location>
</feature>
<feature type="turn" evidence="5">
    <location>
        <begin position="200"/>
        <end position="202"/>
    </location>
</feature>
<feature type="strand" evidence="5">
    <location>
        <begin position="205"/>
        <end position="209"/>
    </location>
</feature>
<feature type="strand" evidence="5">
    <location>
        <begin position="215"/>
        <end position="221"/>
    </location>
</feature>
<feature type="helix" evidence="5">
    <location>
        <begin position="231"/>
        <end position="250"/>
    </location>
</feature>
<feature type="helix" evidence="5">
    <location>
        <begin position="256"/>
        <end position="258"/>
    </location>
</feature>
<feature type="helix" evidence="5">
    <location>
        <begin position="261"/>
        <end position="266"/>
    </location>
</feature>
<feature type="helix" evidence="5">
    <location>
        <begin position="267"/>
        <end position="270"/>
    </location>
</feature>
<feature type="helix" evidence="5">
    <location>
        <begin position="274"/>
        <end position="299"/>
    </location>
</feature>
<feature type="helix" evidence="5">
    <location>
        <begin position="302"/>
        <end position="318"/>
    </location>
</feature>
<feature type="helix" evidence="5">
    <location>
        <begin position="325"/>
        <end position="336"/>
    </location>
</feature>
<feature type="strand" evidence="5">
    <location>
        <begin position="340"/>
        <end position="345"/>
    </location>
</feature>
<feature type="strand" evidence="5">
    <location>
        <begin position="350"/>
        <end position="359"/>
    </location>
</feature>
<feature type="helix" evidence="5">
    <location>
        <begin position="360"/>
        <end position="362"/>
    </location>
</feature>
<feature type="helix" evidence="5">
    <location>
        <begin position="363"/>
        <end position="378"/>
    </location>
</feature>
<feature type="strand" evidence="5">
    <location>
        <begin position="383"/>
        <end position="386"/>
    </location>
</feature>
<keyword id="KW-0002">3D-structure</keyword>
<keyword id="KW-0067">ATP-binding</keyword>
<keyword id="KW-0119">Carbohydrate metabolism</keyword>
<keyword id="KW-0963">Cytoplasm</keyword>
<keyword id="KW-0299">Galactose metabolism</keyword>
<keyword id="KW-0418">Kinase</keyword>
<keyword id="KW-0460">Magnesium</keyword>
<keyword id="KW-0479">Metal-binding</keyword>
<keyword id="KW-0547">Nucleotide-binding</keyword>
<keyword id="KW-1185">Reference proteome</keyword>
<keyword id="KW-0808">Transferase</keyword>
<sequence length="399" mass="43825">MSIVVENSTVLSALTEKFAEVFGDTKEVEYFFSPGRINLIGEHTDYNGGYVFPASITIGTTGLARLREDKKVKLYSENFPKLGVIEFDLDEVEKKDGELWSNYVKGMIVMLKGAGYEIDKGFELLIKGEIPTASGLSSSASLELLVGVVLDDLFNLNVPRLELVQLGQKTENDYIGVNSGILDQFAIGFGEVKKAILLDCNTLKYEMVPVELRDYDIVIMNTNKPRALTESKYNERFAETREALKRMQTRLDIQSLGELSNEEFDANTDLIGDETLIKRARHAVYENNRTKIAQKAFVAGNLTKFGELLNASHASLKDDYEVTGLELDTLAETAQKQAGVLGARMTGAGFGGCAIALVAHDNVSAFEKAVGQVYEEVVGYPASFYVAQIGSGSTKLDVE</sequence>
<accession>Q9R7D7</accession>
<accession>O87521</accession>
<organism>
    <name type="scientific">Lactococcus lactis subsp. lactis (strain IL1403)</name>
    <name type="common">Streptococcus lactis</name>
    <dbReference type="NCBI Taxonomy" id="272623"/>
    <lineage>
        <taxon>Bacteria</taxon>
        <taxon>Bacillati</taxon>
        <taxon>Bacillota</taxon>
        <taxon>Bacilli</taxon>
        <taxon>Lactobacillales</taxon>
        <taxon>Streptococcaceae</taxon>
        <taxon>Lactococcus</taxon>
    </lineage>
</organism>
<name>GAL1_LACLA</name>
<reference key="1">
    <citation type="submission" date="1999-02" db="EMBL/GenBank/DDBJ databases">
        <title>The organization of genes involved in metabolism of gal/lac of Lactococcus lactis.</title>
        <authorList>
            <person name="Lee J.M."/>
            <person name="Chung D.K."/>
            <person name="Park J.H."/>
            <person name="Lee W.K."/>
            <person name="Chang H.C."/>
            <person name="Kim J.H."/>
            <person name="Lee H.J."/>
        </authorList>
    </citation>
    <scope>NUCLEOTIDE SEQUENCE [GENOMIC DNA]</scope>
    <source>
        <strain>ATCC 7962</strain>
    </source>
</reference>
<reference key="2">
    <citation type="journal article" date="2001" name="Genome Res.">
        <title>The complete genome sequence of the lactic acid bacterium Lactococcus lactis ssp. lactis IL1403.</title>
        <authorList>
            <person name="Bolotin A."/>
            <person name="Wincker P."/>
            <person name="Mauger S."/>
            <person name="Jaillon O."/>
            <person name="Malarme K."/>
            <person name="Weissenbach J."/>
            <person name="Ehrlich S.D."/>
            <person name="Sorokin A."/>
        </authorList>
    </citation>
    <scope>NUCLEOTIDE SEQUENCE [LARGE SCALE GENOMIC DNA]</scope>
    <source>
        <strain>IL1403</strain>
    </source>
</reference>
<reference key="3">
    <citation type="journal article" date="1998" name="J. Bacteriol.">
        <title>Transcriptional regulation and evolution of lactose genes in the galactose-lactose operon of Lactococcus lactis NCDO2054.</title>
        <authorList>
            <person name="Vaughan E.E."/>
            <person name="Pridmore R.D."/>
            <person name="Mollet B."/>
        </authorList>
    </citation>
    <scope>NUCLEOTIDE SEQUENCE [GENOMIC DNA] OF 276-399</scope>
    <source>
        <strain>NCDO 2054</strain>
    </source>
</reference>
<reference key="4">
    <citation type="journal article" date="2003" name="J. Biol. Chem.">
        <title>Molecular structure of galactokinase.</title>
        <authorList>
            <person name="Thoden J.B."/>
            <person name="Holden H.M."/>
        </authorList>
    </citation>
    <scope>X-RAY CRYSTALLOGRAPHY (2.1 ANGSTROMS) IN COMPLEX WITH SUBSTRATE AND PHOSPHATE</scope>
    <scope>FUNCTION</scope>
    <scope>ACTIVE SITE</scope>
    <scope>REACTION MECHANISM</scope>
    <scope>SUBUNIT</scope>
</reference>
<dbReference type="EC" id="2.7.1.6" evidence="1"/>
<dbReference type="EMBL" id="U60828">
    <property type="protein sequence ID" value="AAD11510.1"/>
    <property type="molecule type" value="Genomic_DNA"/>
</dbReference>
<dbReference type="EMBL" id="AE005176">
    <property type="protein sequence ID" value="AAK06081.1"/>
    <property type="molecule type" value="Genomic_DNA"/>
</dbReference>
<dbReference type="EMBL" id="AF082008">
    <property type="protein sequence ID" value="AAC63017.1"/>
    <property type="molecule type" value="Genomic_DNA"/>
</dbReference>
<dbReference type="PIR" id="G86872">
    <property type="entry name" value="G86872"/>
</dbReference>
<dbReference type="RefSeq" id="NP_268140.1">
    <property type="nucleotide sequence ID" value="NC_002662.1"/>
</dbReference>
<dbReference type="RefSeq" id="WP_010906249.1">
    <property type="nucleotide sequence ID" value="NC_002662.1"/>
</dbReference>
<dbReference type="PDB" id="1PIE">
    <property type="method" value="X-ray"/>
    <property type="resolution" value="2.10 A"/>
    <property type="chains" value="A=1-399"/>
</dbReference>
<dbReference type="PDBsum" id="1PIE"/>
<dbReference type="SMR" id="Q9R7D7"/>
<dbReference type="PaxDb" id="272623-L0028"/>
<dbReference type="EnsemblBacteria" id="AAK06081">
    <property type="protein sequence ID" value="AAK06081"/>
    <property type="gene ID" value="L0028"/>
</dbReference>
<dbReference type="KEGG" id="lla:L0028"/>
<dbReference type="PATRIC" id="fig|272623.7.peg.2136"/>
<dbReference type="eggNOG" id="COG0153">
    <property type="taxonomic scope" value="Bacteria"/>
</dbReference>
<dbReference type="HOGENOM" id="CLU_017814_2_1_9"/>
<dbReference type="OrthoDB" id="250531at2"/>
<dbReference type="UniPathway" id="UPA00214"/>
<dbReference type="EvolutionaryTrace" id="Q9R7D7"/>
<dbReference type="Proteomes" id="UP000002196">
    <property type="component" value="Chromosome"/>
</dbReference>
<dbReference type="GO" id="GO:0005829">
    <property type="term" value="C:cytosol"/>
    <property type="evidence" value="ECO:0007669"/>
    <property type="project" value="TreeGrafter"/>
</dbReference>
<dbReference type="GO" id="GO:0005524">
    <property type="term" value="F:ATP binding"/>
    <property type="evidence" value="ECO:0007669"/>
    <property type="project" value="UniProtKB-UniRule"/>
</dbReference>
<dbReference type="GO" id="GO:0004335">
    <property type="term" value="F:galactokinase activity"/>
    <property type="evidence" value="ECO:0007669"/>
    <property type="project" value="UniProtKB-UniRule"/>
</dbReference>
<dbReference type="GO" id="GO:0000287">
    <property type="term" value="F:magnesium ion binding"/>
    <property type="evidence" value="ECO:0007669"/>
    <property type="project" value="UniProtKB-UniRule"/>
</dbReference>
<dbReference type="GO" id="GO:0006012">
    <property type="term" value="P:galactose metabolic process"/>
    <property type="evidence" value="ECO:0007669"/>
    <property type="project" value="UniProtKB-UniRule"/>
</dbReference>
<dbReference type="FunFam" id="3.30.230.10:FF:000017">
    <property type="entry name" value="Galactokinase"/>
    <property type="match status" value="1"/>
</dbReference>
<dbReference type="FunFam" id="3.30.70.890:FF:000001">
    <property type="entry name" value="Galactokinase"/>
    <property type="match status" value="1"/>
</dbReference>
<dbReference type="Gene3D" id="3.30.230.10">
    <property type="match status" value="1"/>
</dbReference>
<dbReference type="Gene3D" id="3.30.70.890">
    <property type="entry name" value="GHMP kinase, C-terminal domain"/>
    <property type="match status" value="1"/>
</dbReference>
<dbReference type="HAMAP" id="MF_00246">
    <property type="entry name" value="Galactokinase"/>
    <property type="match status" value="1"/>
</dbReference>
<dbReference type="InterPro" id="IPR000705">
    <property type="entry name" value="Galactokinase"/>
</dbReference>
<dbReference type="InterPro" id="IPR022963">
    <property type="entry name" value="Galactokinase_bac"/>
</dbReference>
<dbReference type="InterPro" id="IPR019741">
    <property type="entry name" value="Galactokinase_CS"/>
</dbReference>
<dbReference type="InterPro" id="IPR019539">
    <property type="entry name" value="GalKase_N"/>
</dbReference>
<dbReference type="InterPro" id="IPR013750">
    <property type="entry name" value="GHMP_kinase_C_dom"/>
</dbReference>
<dbReference type="InterPro" id="IPR036554">
    <property type="entry name" value="GHMP_kinase_C_sf"/>
</dbReference>
<dbReference type="InterPro" id="IPR006204">
    <property type="entry name" value="GHMP_kinase_N_dom"/>
</dbReference>
<dbReference type="InterPro" id="IPR006203">
    <property type="entry name" value="GHMP_knse_ATP-bd_CS"/>
</dbReference>
<dbReference type="InterPro" id="IPR006206">
    <property type="entry name" value="Mevalonate/galactokinase"/>
</dbReference>
<dbReference type="InterPro" id="IPR020568">
    <property type="entry name" value="Ribosomal_Su5_D2-typ_SF"/>
</dbReference>
<dbReference type="InterPro" id="IPR014721">
    <property type="entry name" value="Ribsml_uS5_D2-typ_fold_subgr"/>
</dbReference>
<dbReference type="NCBIfam" id="TIGR00131">
    <property type="entry name" value="gal_kin"/>
    <property type="match status" value="1"/>
</dbReference>
<dbReference type="NCBIfam" id="NF003705">
    <property type="entry name" value="PRK05322.1"/>
    <property type="match status" value="1"/>
</dbReference>
<dbReference type="PANTHER" id="PTHR10457:SF7">
    <property type="entry name" value="GALACTOKINASE-RELATED"/>
    <property type="match status" value="1"/>
</dbReference>
<dbReference type="PANTHER" id="PTHR10457">
    <property type="entry name" value="MEVALONATE KINASE/GALACTOKINASE"/>
    <property type="match status" value="1"/>
</dbReference>
<dbReference type="Pfam" id="PF10509">
    <property type="entry name" value="GalKase_gal_bdg"/>
    <property type="match status" value="1"/>
</dbReference>
<dbReference type="Pfam" id="PF08544">
    <property type="entry name" value="GHMP_kinases_C"/>
    <property type="match status" value="1"/>
</dbReference>
<dbReference type="Pfam" id="PF00288">
    <property type="entry name" value="GHMP_kinases_N"/>
    <property type="match status" value="1"/>
</dbReference>
<dbReference type="PIRSF" id="PIRSF000530">
    <property type="entry name" value="Galactokinase"/>
    <property type="match status" value="1"/>
</dbReference>
<dbReference type="PRINTS" id="PR00473">
    <property type="entry name" value="GALCTOKINASE"/>
</dbReference>
<dbReference type="PRINTS" id="PR00959">
    <property type="entry name" value="MEVGALKINASE"/>
</dbReference>
<dbReference type="SUPFAM" id="SSF55060">
    <property type="entry name" value="GHMP Kinase, C-terminal domain"/>
    <property type="match status" value="1"/>
</dbReference>
<dbReference type="SUPFAM" id="SSF54211">
    <property type="entry name" value="Ribosomal protein S5 domain 2-like"/>
    <property type="match status" value="1"/>
</dbReference>
<dbReference type="PROSITE" id="PS00106">
    <property type="entry name" value="GALACTOKINASE"/>
    <property type="match status" value="1"/>
</dbReference>
<dbReference type="PROSITE" id="PS00627">
    <property type="entry name" value="GHMP_KINASES_ATP"/>
    <property type="match status" value="1"/>
</dbReference>
<proteinExistence type="evidence at protein level"/>
<comment type="function">
    <text evidence="4">Catalyzes the transfer of the gamma-phosphate of ATP to D-galactose to form alpha-D-galactose-1-phosphate (Gal-1-P).</text>
</comment>
<comment type="catalytic activity">
    <reaction evidence="1">
        <text>alpha-D-galactose + ATP = alpha-D-galactose 1-phosphate + ADP + H(+)</text>
        <dbReference type="Rhea" id="RHEA:13553"/>
        <dbReference type="ChEBI" id="CHEBI:15378"/>
        <dbReference type="ChEBI" id="CHEBI:28061"/>
        <dbReference type="ChEBI" id="CHEBI:30616"/>
        <dbReference type="ChEBI" id="CHEBI:58336"/>
        <dbReference type="ChEBI" id="CHEBI:456216"/>
        <dbReference type="EC" id="2.7.1.6"/>
    </reaction>
</comment>
<comment type="pathway">
    <text evidence="1">Carbohydrate metabolism; galactose metabolism.</text>
</comment>
<comment type="subunit">
    <text evidence="4">Monomer.</text>
</comment>
<comment type="subcellular location">
    <subcellularLocation>
        <location evidence="1">Cytoplasm</location>
    </subcellularLocation>
</comment>
<comment type="similarity">
    <text evidence="1">Belongs to the GHMP kinase family. GalK subfamily.</text>
</comment>
<protein>
    <recommendedName>
        <fullName evidence="1">Galactokinase</fullName>
        <ecNumber evidence="1">2.7.1.6</ecNumber>
    </recommendedName>
    <alternativeName>
        <fullName evidence="1">Galactose kinase</fullName>
    </alternativeName>
</protein>
<evidence type="ECO:0000255" key="1">
    <source>
        <dbReference type="HAMAP-Rule" id="MF_00246"/>
    </source>
</evidence>
<evidence type="ECO:0000269" key="2">
    <source>
    </source>
</evidence>
<evidence type="ECO:0000305" key="3"/>
<evidence type="ECO:0000305" key="4">
    <source>
    </source>
</evidence>
<evidence type="ECO:0007829" key="5">
    <source>
        <dbReference type="PDB" id="1PIE"/>
    </source>
</evidence>
<gene>
    <name evidence="1" type="primary">galK</name>
    <name type="ordered locus">LL1983</name>
    <name type="ORF">L0028</name>
</gene>